<feature type="chain" id="PRO_0000215087" description="PF03932 family protein CutC">
    <location>
        <begin position="1"/>
        <end position="254"/>
    </location>
</feature>
<sequence length="254" mass="27341">MTKLEVCCYSVDCAQIAEKAGADRVELCCGQSEGGLTPSVGALMQARETVTIPVHPIVRPRGGDFCYSSNDFTIMKNDIARIRDLGFAGVVVGVLDTDGHIDMPRMREIMSVSGSLAVTFHRAFDMCQNPMIALKQLAELNVARILTSGQQQNAELGLALLKDLVAATKDQGPIIMAGAGVRLTNMQKFIDAGIRELHSSAGRTVPSTMRYRKAGVTMCADSDVDEFSHYCVDGEVVEAMKSLLVMGSPLAKHT</sequence>
<accession>Q66AU9</accession>
<dbReference type="EMBL" id="BX936398">
    <property type="protein sequence ID" value="CAH21269.1"/>
    <property type="molecule type" value="Genomic_DNA"/>
</dbReference>
<dbReference type="RefSeq" id="WP_011192410.1">
    <property type="nucleotide sequence ID" value="NC_006155.1"/>
</dbReference>
<dbReference type="SMR" id="Q66AU9"/>
<dbReference type="GeneID" id="49785979"/>
<dbReference type="KEGG" id="ypo:BZ17_434"/>
<dbReference type="KEGG" id="yps:YPTB2031"/>
<dbReference type="PATRIC" id="fig|273123.14.peg.463"/>
<dbReference type="Proteomes" id="UP000001011">
    <property type="component" value="Chromosome"/>
</dbReference>
<dbReference type="GO" id="GO:0005737">
    <property type="term" value="C:cytoplasm"/>
    <property type="evidence" value="ECO:0007669"/>
    <property type="project" value="UniProtKB-SubCell"/>
</dbReference>
<dbReference type="GO" id="GO:0005507">
    <property type="term" value="F:copper ion binding"/>
    <property type="evidence" value="ECO:0007669"/>
    <property type="project" value="TreeGrafter"/>
</dbReference>
<dbReference type="FunFam" id="3.20.20.380:FF:000001">
    <property type="entry name" value="Copper homeostasis protein CutC"/>
    <property type="match status" value="1"/>
</dbReference>
<dbReference type="Gene3D" id="3.20.20.380">
    <property type="entry name" value="Copper homeostasis (CutC) domain"/>
    <property type="match status" value="1"/>
</dbReference>
<dbReference type="HAMAP" id="MF_00795">
    <property type="entry name" value="CutC"/>
    <property type="match status" value="1"/>
</dbReference>
<dbReference type="InterPro" id="IPR005627">
    <property type="entry name" value="CutC-like"/>
</dbReference>
<dbReference type="InterPro" id="IPR036822">
    <property type="entry name" value="CutC-like_dom_sf"/>
</dbReference>
<dbReference type="NCBIfam" id="NF008603">
    <property type="entry name" value="PRK11572.1"/>
    <property type="match status" value="1"/>
</dbReference>
<dbReference type="PANTHER" id="PTHR12598">
    <property type="entry name" value="COPPER HOMEOSTASIS PROTEIN CUTC"/>
    <property type="match status" value="1"/>
</dbReference>
<dbReference type="PANTHER" id="PTHR12598:SF0">
    <property type="entry name" value="COPPER HOMEOSTASIS PROTEIN CUTC HOMOLOG"/>
    <property type="match status" value="1"/>
</dbReference>
<dbReference type="Pfam" id="PF03932">
    <property type="entry name" value="CutC"/>
    <property type="match status" value="1"/>
</dbReference>
<dbReference type="SUPFAM" id="SSF110395">
    <property type="entry name" value="CutC-like"/>
    <property type="match status" value="1"/>
</dbReference>
<name>CUTC_YERPS</name>
<reference key="1">
    <citation type="journal article" date="2004" name="Proc. Natl. Acad. Sci. U.S.A.">
        <title>Insights into the evolution of Yersinia pestis through whole-genome comparison with Yersinia pseudotuberculosis.</title>
        <authorList>
            <person name="Chain P.S.G."/>
            <person name="Carniel E."/>
            <person name="Larimer F.W."/>
            <person name="Lamerdin J."/>
            <person name="Stoutland P.O."/>
            <person name="Regala W.M."/>
            <person name="Georgescu A.M."/>
            <person name="Vergez L.M."/>
            <person name="Land M.L."/>
            <person name="Motin V.L."/>
            <person name="Brubaker R.R."/>
            <person name="Fowler J."/>
            <person name="Hinnebusch J."/>
            <person name="Marceau M."/>
            <person name="Medigue C."/>
            <person name="Simonet M."/>
            <person name="Chenal-Francisque V."/>
            <person name="Souza B."/>
            <person name="Dacheux D."/>
            <person name="Elliott J.M."/>
            <person name="Derbise A."/>
            <person name="Hauser L.J."/>
            <person name="Garcia E."/>
        </authorList>
    </citation>
    <scope>NUCLEOTIDE SEQUENCE [LARGE SCALE GENOMIC DNA]</scope>
    <source>
        <strain>IP32953</strain>
    </source>
</reference>
<protein>
    <recommendedName>
        <fullName evidence="1">PF03932 family protein CutC</fullName>
    </recommendedName>
</protein>
<proteinExistence type="inferred from homology"/>
<keyword id="KW-0963">Cytoplasm</keyword>
<comment type="subcellular location">
    <subcellularLocation>
        <location evidence="1">Cytoplasm</location>
    </subcellularLocation>
</comment>
<comment type="similarity">
    <text evidence="1">Belongs to the CutC family.</text>
</comment>
<comment type="caution">
    <text evidence="1">Once thought to be involved in copper homeostasis, experiments in E.coli have shown this is not the case.</text>
</comment>
<organism>
    <name type="scientific">Yersinia pseudotuberculosis serotype I (strain IP32953)</name>
    <dbReference type="NCBI Taxonomy" id="273123"/>
    <lineage>
        <taxon>Bacteria</taxon>
        <taxon>Pseudomonadati</taxon>
        <taxon>Pseudomonadota</taxon>
        <taxon>Gammaproteobacteria</taxon>
        <taxon>Enterobacterales</taxon>
        <taxon>Yersiniaceae</taxon>
        <taxon>Yersinia</taxon>
    </lineage>
</organism>
<evidence type="ECO:0000255" key="1">
    <source>
        <dbReference type="HAMAP-Rule" id="MF_00795"/>
    </source>
</evidence>
<gene>
    <name evidence="1" type="primary">cutC</name>
    <name type="ordered locus">YPTB2031</name>
</gene>